<accession>A5V3V4</accession>
<name>PYRB_RHIWR</name>
<proteinExistence type="inferred from homology"/>
<reference key="1">
    <citation type="journal article" date="2010" name="J. Bacteriol.">
        <title>Genome sequence of the dioxin-mineralizing bacterium Sphingomonas wittichii RW1.</title>
        <authorList>
            <person name="Miller T.R."/>
            <person name="Delcher A.L."/>
            <person name="Salzberg S.L."/>
            <person name="Saunders E."/>
            <person name="Detter J.C."/>
            <person name="Halden R.U."/>
        </authorList>
    </citation>
    <scope>NUCLEOTIDE SEQUENCE [LARGE SCALE GENOMIC DNA]</scope>
    <source>
        <strain>DSM 6014 / CCUG 31198 / JCM 15750 / NBRC 105917 / EY 4224 / RW1</strain>
    </source>
</reference>
<keyword id="KW-0665">Pyrimidine biosynthesis</keyword>
<keyword id="KW-1185">Reference proteome</keyword>
<keyword id="KW-0808">Transferase</keyword>
<protein>
    <recommendedName>
        <fullName evidence="1">Aspartate carbamoyltransferase catalytic subunit</fullName>
        <ecNumber evidence="1">2.1.3.2</ecNumber>
    </recommendedName>
    <alternativeName>
        <fullName evidence="1">Aspartate transcarbamylase</fullName>
        <shortName evidence="1">ATCase</shortName>
    </alternativeName>
</protein>
<organism>
    <name type="scientific">Rhizorhabdus wittichii (strain DSM 6014 / CCUG 31198 / JCM 15750 / NBRC 105917 / EY 4224 / RW1)</name>
    <name type="common">Sphingomonas wittichii</name>
    <dbReference type="NCBI Taxonomy" id="392499"/>
    <lineage>
        <taxon>Bacteria</taxon>
        <taxon>Pseudomonadati</taxon>
        <taxon>Pseudomonadota</taxon>
        <taxon>Alphaproteobacteria</taxon>
        <taxon>Sphingomonadales</taxon>
        <taxon>Sphingomonadaceae</taxon>
        <taxon>Rhizorhabdus</taxon>
    </lineage>
</organism>
<feature type="chain" id="PRO_0000321160" description="Aspartate carbamoyltransferase catalytic subunit">
    <location>
        <begin position="1"/>
        <end position="316"/>
    </location>
</feature>
<feature type="binding site" evidence="1">
    <location>
        <position position="60"/>
    </location>
    <ligand>
        <name>carbamoyl phosphate</name>
        <dbReference type="ChEBI" id="CHEBI:58228"/>
    </ligand>
</feature>
<feature type="binding site" evidence="1">
    <location>
        <position position="61"/>
    </location>
    <ligand>
        <name>carbamoyl phosphate</name>
        <dbReference type="ChEBI" id="CHEBI:58228"/>
    </ligand>
</feature>
<feature type="binding site" evidence="1">
    <location>
        <position position="88"/>
    </location>
    <ligand>
        <name>L-aspartate</name>
        <dbReference type="ChEBI" id="CHEBI:29991"/>
    </ligand>
</feature>
<feature type="binding site" evidence="1">
    <location>
        <position position="110"/>
    </location>
    <ligand>
        <name>carbamoyl phosphate</name>
        <dbReference type="ChEBI" id="CHEBI:58228"/>
    </ligand>
</feature>
<feature type="binding site" evidence="1">
    <location>
        <position position="138"/>
    </location>
    <ligand>
        <name>carbamoyl phosphate</name>
        <dbReference type="ChEBI" id="CHEBI:58228"/>
    </ligand>
</feature>
<feature type="binding site" evidence="1">
    <location>
        <position position="141"/>
    </location>
    <ligand>
        <name>carbamoyl phosphate</name>
        <dbReference type="ChEBI" id="CHEBI:58228"/>
    </ligand>
</feature>
<feature type="binding site" evidence="1">
    <location>
        <position position="171"/>
    </location>
    <ligand>
        <name>L-aspartate</name>
        <dbReference type="ChEBI" id="CHEBI:29991"/>
    </ligand>
</feature>
<feature type="binding site" evidence="1">
    <location>
        <position position="225"/>
    </location>
    <ligand>
        <name>L-aspartate</name>
        <dbReference type="ChEBI" id="CHEBI:29991"/>
    </ligand>
</feature>
<feature type="binding site" evidence="1">
    <location>
        <position position="266"/>
    </location>
    <ligand>
        <name>carbamoyl phosphate</name>
        <dbReference type="ChEBI" id="CHEBI:58228"/>
    </ligand>
</feature>
<feature type="binding site" evidence="1">
    <location>
        <position position="267"/>
    </location>
    <ligand>
        <name>carbamoyl phosphate</name>
        <dbReference type="ChEBI" id="CHEBI:58228"/>
    </ligand>
</feature>
<sequence>MSASFPHRHLTGIYGLQPHEILFLLDEAEQWIALNRATSKHDDRLAGLTLINAFFENSTRTLLSFEIAGKRLGADVVNMQVGASSVKKGETLIDTAMTLNAMRADMIVIRHQSSGAVQLIADKVDCPVLNAGDGRHEHPTQALLDALTIRRRKGRIAGLVVAICGDILHSRVARSNILALTTLGAEVRVVAPPTLMPAAIERMGAVPFHDFDAGLDGADVVMMLRLQNERMDGAYLPSPREFHALYGLTPERLERAAPDALVMHPGPMNRGVEITSSVADHPSRSAITEQVEMGVAVRMACLDVLTRRRRGVEGWA</sequence>
<comment type="function">
    <text evidence="1">Catalyzes the condensation of carbamoyl phosphate and aspartate to form carbamoyl aspartate and inorganic phosphate, the committed step in the de novo pyrimidine nucleotide biosynthesis pathway.</text>
</comment>
<comment type="catalytic activity">
    <reaction evidence="1">
        <text>carbamoyl phosphate + L-aspartate = N-carbamoyl-L-aspartate + phosphate + H(+)</text>
        <dbReference type="Rhea" id="RHEA:20013"/>
        <dbReference type="ChEBI" id="CHEBI:15378"/>
        <dbReference type="ChEBI" id="CHEBI:29991"/>
        <dbReference type="ChEBI" id="CHEBI:32814"/>
        <dbReference type="ChEBI" id="CHEBI:43474"/>
        <dbReference type="ChEBI" id="CHEBI:58228"/>
        <dbReference type="EC" id="2.1.3.2"/>
    </reaction>
</comment>
<comment type="pathway">
    <text evidence="1">Pyrimidine metabolism; UMP biosynthesis via de novo pathway; (S)-dihydroorotate from bicarbonate: step 2/3.</text>
</comment>
<comment type="subunit">
    <text evidence="1">Heterododecamer (2C3:3R2) of six catalytic PyrB chains organized as two trimers (C3), and six regulatory PyrI chains organized as three dimers (R2).</text>
</comment>
<comment type="similarity">
    <text evidence="1">Belongs to the aspartate/ornithine carbamoyltransferase superfamily. ATCase family.</text>
</comment>
<evidence type="ECO:0000255" key="1">
    <source>
        <dbReference type="HAMAP-Rule" id="MF_00001"/>
    </source>
</evidence>
<dbReference type="EC" id="2.1.3.2" evidence="1"/>
<dbReference type="EMBL" id="CP000699">
    <property type="protein sequence ID" value="ABQ66970.1"/>
    <property type="molecule type" value="Genomic_DNA"/>
</dbReference>
<dbReference type="SMR" id="A5V3V4"/>
<dbReference type="STRING" id="392499.Swit_0602"/>
<dbReference type="PaxDb" id="392499-Swit_0602"/>
<dbReference type="KEGG" id="swi:Swit_0602"/>
<dbReference type="eggNOG" id="COG0540">
    <property type="taxonomic scope" value="Bacteria"/>
</dbReference>
<dbReference type="HOGENOM" id="CLU_043846_2_0_5"/>
<dbReference type="OrthoDB" id="9774690at2"/>
<dbReference type="UniPathway" id="UPA00070">
    <property type="reaction ID" value="UER00116"/>
</dbReference>
<dbReference type="Proteomes" id="UP000001989">
    <property type="component" value="Chromosome"/>
</dbReference>
<dbReference type="GO" id="GO:0005829">
    <property type="term" value="C:cytosol"/>
    <property type="evidence" value="ECO:0007669"/>
    <property type="project" value="TreeGrafter"/>
</dbReference>
<dbReference type="GO" id="GO:0016597">
    <property type="term" value="F:amino acid binding"/>
    <property type="evidence" value="ECO:0007669"/>
    <property type="project" value="InterPro"/>
</dbReference>
<dbReference type="GO" id="GO:0004070">
    <property type="term" value="F:aspartate carbamoyltransferase activity"/>
    <property type="evidence" value="ECO:0007669"/>
    <property type="project" value="UniProtKB-UniRule"/>
</dbReference>
<dbReference type="GO" id="GO:0006207">
    <property type="term" value="P:'de novo' pyrimidine nucleobase biosynthetic process"/>
    <property type="evidence" value="ECO:0007669"/>
    <property type="project" value="InterPro"/>
</dbReference>
<dbReference type="GO" id="GO:0044205">
    <property type="term" value="P:'de novo' UMP biosynthetic process"/>
    <property type="evidence" value="ECO:0007669"/>
    <property type="project" value="UniProtKB-UniRule"/>
</dbReference>
<dbReference type="GO" id="GO:0006520">
    <property type="term" value="P:amino acid metabolic process"/>
    <property type="evidence" value="ECO:0007669"/>
    <property type="project" value="InterPro"/>
</dbReference>
<dbReference type="FunFam" id="3.40.50.1370:FF:000007">
    <property type="entry name" value="Aspartate carbamoyltransferase"/>
    <property type="match status" value="1"/>
</dbReference>
<dbReference type="Gene3D" id="3.40.50.1370">
    <property type="entry name" value="Aspartate/ornithine carbamoyltransferase"/>
    <property type="match status" value="2"/>
</dbReference>
<dbReference type="HAMAP" id="MF_00001">
    <property type="entry name" value="Asp_carb_tr"/>
    <property type="match status" value="1"/>
</dbReference>
<dbReference type="InterPro" id="IPR006132">
    <property type="entry name" value="Asp/Orn_carbamoyltranf_P-bd"/>
</dbReference>
<dbReference type="InterPro" id="IPR006130">
    <property type="entry name" value="Asp/Orn_carbamoylTrfase"/>
</dbReference>
<dbReference type="InterPro" id="IPR036901">
    <property type="entry name" value="Asp/Orn_carbamoylTrfase_sf"/>
</dbReference>
<dbReference type="InterPro" id="IPR002082">
    <property type="entry name" value="Asp_carbamoyltransf"/>
</dbReference>
<dbReference type="InterPro" id="IPR006131">
    <property type="entry name" value="Asp_carbamoyltransf_Asp/Orn-bd"/>
</dbReference>
<dbReference type="NCBIfam" id="TIGR00670">
    <property type="entry name" value="asp_carb_tr"/>
    <property type="match status" value="1"/>
</dbReference>
<dbReference type="NCBIfam" id="NF002032">
    <property type="entry name" value="PRK00856.1"/>
    <property type="match status" value="1"/>
</dbReference>
<dbReference type="PANTHER" id="PTHR45753:SF6">
    <property type="entry name" value="ASPARTATE CARBAMOYLTRANSFERASE"/>
    <property type="match status" value="1"/>
</dbReference>
<dbReference type="PANTHER" id="PTHR45753">
    <property type="entry name" value="ORNITHINE CARBAMOYLTRANSFERASE, MITOCHONDRIAL"/>
    <property type="match status" value="1"/>
</dbReference>
<dbReference type="Pfam" id="PF00185">
    <property type="entry name" value="OTCace"/>
    <property type="match status" value="1"/>
</dbReference>
<dbReference type="Pfam" id="PF02729">
    <property type="entry name" value="OTCace_N"/>
    <property type="match status" value="1"/>
</dbReference>
<dbReference type="PRINTS" id="PR00100">
    <property type="entry name" value="AOTCASE"/>
</dbReference>
<dbReference type="PRINTS" id="PR00101">
    <property type="entry name" value="ATCASE"/>
</dbReference>
<dbReference type="SUPFAM" id="SSF53671">
    <property type="entry name" value="Aspartate/ornithine carbamoyltransferase"/>
    <property type="match status" value="1"/>
</dbReference>
<dbReference type="PROSITE" id="PS00097">
    <property type="entry name" value="CARBAMOYLTRANSFERASE"/>
    <property type="match status" value="1"/>
</dbReference>
<gene>
    <name evidence="1" type="primary">pyrB</name>
    <name type="ordered locus">Swit_0602</name>
</gene>